<proteinExistence type="evidence at protein level"/>
<name>CELF2_CHICK</name>
<evidence type="ECO:0000255" key="1">
    <source>
        <dbReference type="PROSITE-ProRule" id="PRU00176"/>
    </source>
</evidence>
<evidence type="ECO:0000269" key="2">
    <source>
    </source>
</evidence>
<evidence type="ECO:0000269" key="3">
    <source>
    </source>
</evidence>
<evidence type="ECO:0000303" key="4">
    <source>
    </source>
</evidence>
<evidence type="ECO:0000305" key="5"/>
<dbReference type="EMBL" id="AY288985">
    <property type="protein sequence ID" value="AAP57761.1"/>
    <property type="molecule type" value="mRNA"/>
</dbReference>
<dbReference type="EMBL" id="AY288986">
    <property type="protein sequence ID" value="AAP57762.1"/>
    <property type="molecule type" value="mRNA"/>
</dbReference>
<dbReference type="RefSeq" id="NP_989591.2">
    <property type="nucleotide sequence ID" value="NM_204260.2"/>
</dbReference>
<dbReference type="BMRB" id="Q7T2T1"/>
<dbReference type="SMR" id="Q7T2T1"/>
<dbReference type="BioGRID" id="675146">
    <property type="interactions" value="1"/>
</dbReference>
<dbReference type="FunCoup" id="Q7T2T1">
    <property type="interactions" value="197"/>
</dbReference>
<dbReference type="STRING" id="9031.ENSGALP00000066957"/>
<dbReference type="PaxDb" id="9031-ENSGALP00000010845"/>
<dbReference type="GeneID" id="374111"/>
<dbReference type="KEGG" id="gga:374111"/>
<dbReference type="CTD" id="10659"/>
<dbReference type="VEuPathDB" id="HostDB:geneid_374111"/>
<dbReference type="eggNOG" id="KOG0144">
    <property type="taxonomic scope" value="Eukaryota"/>
</dbReference>
<dbReference type="InParanoid" id="Q7T2T1"/>
<dbReference type="OrthoDB" id="410044at2759"/>
<dbReference type="PhylomeDB" id="Q7T2T1"/>
<dbReference type="PRO" id="PR:Q7T2T1"/>
<dbReference type="Proteomes" id="UP000000539">
    <property type="component" value="Unassembled WGS sequence"/>
</dbReference>
<dbReference type="GO" id="GO:0005737">
    <property type="term" value="C:cytoplasm"/>
    <property type="evidence" value="ECO:0000314"/>
    <property type="project" value="AgBase"/>
</dbReference>
<dbReference type="GO" id="GO:0005634">
    <property type="term" value="C:nucleus"/>
    <property type="evidence" value="ECO:0000314"/>
    <property type="project" value="AgBase"/>
</dbReference>
<dbReference type="GO" id="GO:1990904">
    <property type="term" value="C:ribonucleoprotein complex"/>
    <property type="evidence" value="ECO:0000318"/>
    <property type="project" value="GO_Central"/>
</dbReference>
<dbReference type="GO" id="GO:0042835">
    <property type="term" value="F:BRE binding"/>
    <property type="evidence" value="ECO:0000304"/>
    <property type="project" value="AgBase"/>
</dbReference>
<dbReference type="GO" id="GO:0003730">
    <property type="term" value="F:mRNA 3'-UTR binding"/>
    <property type="evidence" value="ECO:0000318"/>
    <property type="project" value="GO_Central"/>
</dbReference>
<dbReference type="GO" id="GO:0000900">
    <property type="term" value="F:mRNA regulatory element binding translation repressor activity"/>
    <property type="evidence" value="ECO:0000304"/>
    <property type="project" value="AgBase"/>
</dbReference>
<dbReference type="GO" id="GO:0003676">
    <property type="term" value="F:nucleic acid binding"/>
    <property type="evidence" value="ECO:0000304"/>
    <property type="project" value="AgBase"/>
</dbReference>
<dbReference type="GO" id="GO:0000166">
    <property type="term" value="F:nucleotide binding"/>
    <property type="evidence" value="ECO:0000304"/>
    <property type="project" value="AgBase"/>
</dbReference>
<dbReference type="GO" id="GO:0003723">
    <property type="term" value="F:RNA binding"/>
    <property type="evidence" value="ECO:0000304"/>
    <property type="project" value="AgBase"/>
</dbReference>
<dbReference type="GO" id="GO:0000380">
    <property type="term" value="P:alternative mRNA splicing, via spliceosome"/>
    <property type="evidence" value="ECO:0000314"/>
    <property type="project" value="AgBase"/>
</dbReference>
<dbReference type="GO" id="GO:0006376">
    <property type="term" value="P:mRNA splice site recognition"/>
    <property type="evidence" value="ECO:0000318"/>
    <property type="project" value="GO_Central"/>
</dbReference>
<dbReference type="GO" id="GO:0000381">
    <property type="term" value="P:regulation of alternative mRNA splicing, via spliceosome"/>
    <property type="evidence" value="ECO:0000318"/>
    <property type="project" value="GO_Central"/>
</dbReference>
<dbReference type="CDD" id="cd12631">
    <property type="entry name" value="RRM1_CELF1_2_Bruno"/>
    <property type="match status" value="1"/>
</dbReference>
<dbReference type="CDD" id="cd12634">
    <property type="entry name" value="RRM2_CELF1_2"/>
    <property type="match status" value="1"/>
</dbReference>
<dbReference type="CDD" id="cd12638">
    <property type="entry name" value="RRM3_CELF1_2"/>
    <property type="match status" value="1"/>
</dbReference>
<dbReference type="FunFam" id="3.30.70.330:FF:000013">
    <property type="entry name" value="CUGBP Elav-like family member 1 isoform 2"/>
    <property type="match status" value="1"/>
</dbReference>
<dbReference type="FunFam" id="3.30.70.330:FF:000015">
    <property type="entry name" value="CUGBP Elav-like family member 1 isoform 2"/>
    <property type="match status" value="1"/>
</dbReference>
<dbReference type="FunFam" id="3.30.70.330:FF:000016">
    <property type="entry name" value="CUGBP Elav-like family member 1 isoform 2"/>
    <property type="match status" value="1"/>
</dbReference>
<dbReference type="Gene3D" id="3.30.70.330">
    <property type="match status" value="3"/>
</dbReference>
<dbReference type="InterPro" id="IPR034196">
    <property type="entry name" value="CELF1/2_RRM1"/>
</dbReference>
<dbReference type="InterPro" id="IPR034198">
    <property type="entry name" value="CELF1/2_RRM2"/>
</dbReference>
<dbReference type="InterPro" id="IPR034199">
    <property type="entry name" value="CELF1/2_RRM3"/>
</dbReference>
<dbReference type="InterPro" id="IPR012677">
    <property type="entry name" value="Nucleotide-bd_a/b_plait_sf"/>
</dbReference>
<dbReference type="InterPro" id="IPR035979">
    <property type="entry name" value="RBD_domain_sf"/>
</dbReference>
<dbReference type="InterPro" id="IPR000504">
    <property type="entry name" value="RRM_dom"/>
</dbReference>
<dbReference type="PANTHER" id="PTHR24012">
    <property type="entry name" value="RNA BINDING PROTEIN"/>
    <property type="match status" value="1"/>
</dbReference>
<dbReference type="Pfam" id="PF00076">
    <property type="entry name" value="RRM_1"/>
    <property type="match status" value="3"/>
</dbReference>
<dbReference type="SMART" id="SM00360">
    <property type="entry name" value="RRM"/>
    <property type="match status" value="3"/>
</dbReference>
<dbReference type="SUPFAM" id="SSF54928">
    <property type="entry name" value="RNA-binding domain, RBD"/>
    <property type="match status" value="2"/>
</dbReference>
<dbReference type="PROSITE" id="PS50102">
    <property type="entry name" value="RRM"/>
    <property type="match status" value="3"/>
</dbReference>
<reference key="1">
    <citation type="journal article" date="2004" name="J. Cell Sci.">
        <title>Multiple domains control the subcellular localization and activity of ETR-3, a regulator of nuclear and cytoplasmic RNA processing events.</title>
        <authorList>
            <person name="Ladd A.N."/>
            <person name="Cooper T.A."/>
        </authorList>
    </citation>
    <scope>NUCLEOTIDE SEQUENCE [MRNA] (ISOFORMS 1 AND 2)</scope>
    <scope>FUNCTION</scope>
    <scope>SUBCELLULAR LOCATION</scope>
    <scope>TISSUE SPECIFICITY</scope>
    <scope>DEVELOPMENTAL STAGE</scope>
    <source>
        <tissue>Heart</tissue>
    </source>
</reference>
<reference key="2">
    <citation type="journal article" date="2005" name="Dev. Dyn.">
        <title>Dynamic balance between activation and repression regulates pre-mRNA alternative splicing during heart development.</title>
        <authorList>
            <person name="Ladd A.N."/>
            <person name="Stenberg M.G."/>
            <person name="Swanson M.S."/>
            <person name="Cooper T.A."/>
        </authorList>
    </citation>
    <scope>SUBCELLULAR LOCATION</scope>
    <scope>DEVELOPMENTAL STAGE</scope>
</reference>
<keyword id="KW-0025">Alternative splicing</keyword>
<keyword id="KW-0963">Cytoplasm</keyword>
<keyword id="KW-0507">mRNA processing</keyword>
<keyword id="KW-0539">Nucleus</keyword>
<keyword id="KW-1185">Reference proteome</keyword>
<keyword id="KW-0677">Repeat</keyword>
<keyword id="KW-0678">Repressor</keyword>
<keyword id="KW-0694">RNA-binding</keyword>
<gene>
    <name type="primary">CELF2</name>
    <name type="synonym">CUGBP2</name>
</gene>
<accession>Q7T2T1</accession>
<accession>Q7T2T0</accession>
<feature type="chain" id="PRO_0000295193" description="CUGBP Elav-like family member 2">
    <location>
        <begin position="1"/>
        <end position="484"/>
    </location>
</feature>
<feature type="domain" description="RRM 1" evidence="1">
    <location>
        <begin position="16"/>
        <end position="99"/>
    </location>
</feature>
<feature type="domain" description="RRM 2" evidence="1">
    <location>
        <begin position="108"/>
        <end position="188"/>
    </location>
</feature>
<feature type="domain" description="RRM 3" evidence="1">
    <location>
        <begin position="399"/>
        <end position="477"/>
    </location>
</feature>
<feature type="region of interest" description="Necessary for nuclear export">
    <location>
        <begin position="1"/>
        <end position="89"/>
    </location>
</feature>
<feature type="region of interest" description="Necessary for nuclear export">
    <location>
        <begin position="90"/>
        <end position="178"/>
    </location>
</feature>
<feature type="region of interest" description="Necessary for splicing activity">
    <location>
        <begin position="188"/>
        <end position="240"/>
    </location>
</feature>
<feature type="region of interest" description="Necessary for nuclear localization">
    <location>
        <begin position="347"/>
        <end position="399"/>
    </location>
</feature>
<feature type="region of interest" description="Necessary for nuclear localization and splicing activity">
    <location>
        <begin position="426"/>
        <end position="484"/>
    </location>
</feature>
<feature type="splice variant" id="VSP_026816" description="In isoform 2." evidence="4">
    <original>G</original>
    <variation>GTVNS</variation>
    <location>
        <position position="335"/>
    </location>
</feature>
<sequence length="484" mass="51581">MNGALDHSDQPDPDAIKTFVGQIPRSWSEKELKELFEPYGAVYQINVLRDRSQNPPQSKGCCFVTFYTRKAALEAQNALHNIKTLPGMHHPIQMKPADSEKSNAVEDRKLFIGMVSKKCNENDIRVMFSPFGQIEECRILRGPDGLSRGCAFVTFSTRAMAQNAIKAMHQSQTMEGCSSPIVVKFADTQKDKEQRRLQQQLAQQMQQLNTATWGNLTGLGGLTPQYLALLQQATSSSNLGAFSGIQQMAGMNALQLQNLATLAAAAAAAQTSATTTNANPLSTTTGALGALTSPVAASTANSTAGAAMNSLTSLGTLQGLAGATVGLNNINALAGMAALNGGLGATGLTNGTAGTMDALTQAYSGIQQYAAAALPTLYSQSLLQQQSAAGSQKEGPEGANLFIYHLPQEFGDQDILQMFMPFGNVISAKVFIDKQTNLSKCFGFVSYDNPVSAQAAIQAMNGFQIGMKRLKVQLKRSKNDSKPY</sequence>
<organism>
    <name type="scientific">Gallus gallus</name>
    <name type="common">Chicken</name>
    <dbReference type="NCBI Taxonomy" id="9031"/>
    <lineage>
        <taxon>Eukaryota</taxon>
        <taxon>Metazoa</taxon>
        <taxon>Chordata</taxon>
        <taxon>Craniata</taxon>
        <taxon>Vertebrata</taxon>
        <taxon>Euteleostomi</taxon>
        <taxon>Archelosauria</taxon>
        <taxon>Archosauria</taxon>
        <taxon>Dinosauria</taxon>
        <taxon>Saurischia</taxon>
        <taxon>Theropoda</taxon>
        <taxon>Coelurosauria</taxon>
        <taxon>Aves</taxon>
        <taxon>Neognathae</taxon>
        <taxon>Galloanserae</taxon>
        <taxon>Galliformes</taxon>
        <taxon>Phasianidae</taxon>
        <taxon>Phasianinae</taxon>
        <taxon>Gallus</taxon>
    </lineage>
</organism>
<protein>
    <recommendedName>
        <fullName>CUGBP Elav-like family member 2</fullName>
        <shortName>CELF-2</shortName>
    </recommendedName>
    <alternativeName>
        <fullName>Bruno-like protein 3</fullName>
    </alternativeName>
    <alternativeName>
        <fullName>CUG triplet repeat RNA-binding protein 2</fullName>
        <shortName>CUG-BP2</shortName>
    </alternativeName>
    <alternativeName>
        <fullName>CUG-BP- and ETR-3-like factor 2</fullName>
    </alternativeName>
    <alternativeName>
        <fullName>ELAV-type RNA-binding protein 3</fullName>
        <shortName>ETR-3</shortName>
    </alternativeName>
    <alternativeName>
        <fullName>RNA-binding protein BRUNOL-3</fullName>
    </alternativeName>
</protein>
<comment type="function">
    <text evidence="2">RNA-binding protein implicated in the regulation of several post-transcriptional events. May be involved in mRNA translation repression and stability. Mediates exon inclusion in TNNT2 pre-mRNA.</text>
</comment>
<comment type="subcellular location">
    <subcellularLocation>
        <location evidence="3">Nucleus</location>
    </subcellularLocation>
    <subcellularLocation>
        <location evidence="3">Cytoplasm</location>
    </subcellularLocation>
    <text evidence="3">Shuttles between the nucleus and the cytoplasm in a CRM1-dependent manner.</text>
</comment>
<comment type="alternative products">
    <event type="alternative splicing"/>
    <isoform>
        <id>Q7T2T1-1</id>
        <name>1</name>
        <name>Variant L</name>
        <sequence type="displayed"/>
    </isoform>
    <isoform>
        <id>Q7T2T1-2</id>
        <name>2</name>
        <name>Variant 4</name>
        <sequence type="described" ref="VSP_026816"/>
    </isoform>
</comment>
<comment type="tissue specificity">
    <text evidence="2">Expressed in heart.</text>
</comment>
<comment type="developmental stage">
    <text evidence="2 3">Expressed in heart at embryonic day 12 and 14 (at protein level). Expressed in heart at embryonic day 8.</text>
</comment>
<comment type="similarity">
    <text evidence="5">Belongs to the CELF/BRUNOL family.</text>
</comment>